<proteinExistence type="inferred from homology"/>
<feature type="chain" id="PRO_0000132637" description="Small ribosomal subunit protein uS4c">
    <location>
        <begin position="1"/>
        <end position="201"/>
    </location>
</feature>
<feature type="domain" description="S4 RNA-binding">
    <location>
        <begin position="89"/>
        <end position="169"/>
    </location>
</feature>
<feature type="region of interest" description="Disordered" evidence="2">
    <location>
        <begin position="16"/>
        <end position="43"/>
    </location>
</feature>
<organism>
    <name type="scientific">Nymphaea alba</name>
    <name type="common">White water-lily</name>
    <name type="synonym">Castalia alba</name>
    <dbReference type="NCBI Taxonomy" id="34301"/>
    <lineage>
        <taxon>Eukaryota</taxon>
        <taxon>Viridiplantae</taxon>
        <taxon>Streptophyta</taxon>
        <taxon>Embryophyta</taxon>
        <taxon>Tracheophyta</taxon>
        <taxon>Spermatophyta</taxon>
        <taxon>Magnoliopsida</taxon>
        <taxon>Nymphaeales</taxon>
        <taxon>Nymphaeaceae</taxon>
        <taxon>Nymphaea</taxon>
    </lineage>
</organism>
<gene>
    <name type="primary">rps4</name>
</gene>
<comment type="function">
    <text evidence="1">One of the primary rRNA binding proteins, it binds directly to 16S rRNA where it nucleates assembly of the body of the 30S subunit.</text>
</comment>
<comment type="function">
    <text evidence="1">With S5 and S12 plays an important role in translational accuracy.</text>
</comment>
<comment type="subunit">
    <text evidence="1">Part of the 30S ribosomal subunit. Contacts protein S5. The interaction surface between S4 and S5 is involved in control of translational fidelity (By similarity).</text>
</comment>
<comment type="subcellular location">
    <subcellularLocation>
        <location>Plastid</location>
        <location>Chloroplast</location>
    </subcellularLocation>
</comment>
<comment type="similarity">
    <text evidence="3">Belongs to the universal ribosomal protein uS4 family.</text>
</comment>
<reference key="1">
    <citation type="journal article" date="2004" name="Mol. Biol. Evol.">
        <title>The chloroplast genome of Nymphaea alba: whole-genome analyses and the problem of identifying the most basal angiosperm.</title>
        <authorList>
            <person name="Goremykin V.V."/>
            <person name="Hirsch-Ernst K.I."/>
            <person name="Woelfl S."/>
            <person name="Hellwig F.H."/>
        </authorList>
    </citation>
    <scope>NUCLEOTIDE SEQUENCE [LARGE SCALE GENOMIC DNA]</scope>
</reference>
<accession>Q6EW46</accession>
<sequence>MSRYRGPRFKKIRRLGALPGLTSKKPRSASDLRNQSRSGKRSQYRIRLEEKQKLRFHYGLTERQLLRYVRIAGKANGSTGQVLLQLLEMRLDNILFRLGMASTIPGARQLVNHGHILVNGRLVDIPSYRCKPRDIITTKDKQGSRALIQNHMDSSSNAELPKHLTLHSFQYKGVVNQIIDSKWVGLKVNELLIVEYYSRQT</sequence>
<dbReference type="EMBL" id="AJ627251">
    <property type="protein sequence ID" value="CAF28595.1"/>
    <property type="molecule type" value="Genomic_DNA"/>
</dbReference>
<dbReference type="RefSeq" id="YP_053157.1">
    <property type="nucleotide sequence ID" value="NC_006050.1"/>
</dbReference>
<dbReference type="SMR" id="Q6EW46"/>
<dbReference type="GeneID" id="2896215"/>
<dbReference type="GO" id="GO:0009507">
    <property type="term" value="C:chloroplast"/>
    <property type="evidence" value="ECO:0007669"/>
    <property type="project" value="UniProtKB-SubCell"/>
</dbReference>
<dbReference type="GO" id="GO:0015935">
    <property type="term" value="C:small ribosomal subunit"/>
    <property type="evidence" value="ECO:0007669"/>
    <property type="project" value="InterPro"/>
</dbReference>
<dbReference type="GO" id="GO:0019843">
    <property type="term" value="F:rRNA binding"/>
    <property type="evidence" value="ECO:0007669"/>
    <property type="project" value="UniProtKB-UniRule"/>
</dbReference>
<dbReference type="GO" id="GO:0003735">
    <property type="term" value="F:structural constituent of ribosome"/>
    <property type="evidence" value="ECO:0007669"/>
    <property type="project" value="InterPro"/>
</dbReference>
<dbReference type="GO" id="GO:0042274">
    <property type="term" value="P:ribosomal small subunit biogenesis"/>
    <property type="evidence" value="ECO:0007669"/>
    <property type="project" value="TreeGrafter"/>
</dbReference>
<dbReference type="GO" id="GO:0006412">
    <property type="term" value="P:translation"/>
    <property type="evidence" value="ECO:0007669"/>
    <property type="project" value="UniProtKB-UniRule"/>
</dbReference>
<dbReference type="CDD" id="cd00165">
    <property type="entry name" value="S4"/>
    <property type="match status" value="1"/>
</dbReference>
<dbReference type="FunFam" id="1.10.1050.10:FF:000002">
    <property type="entry name" value="30S ribosomal protein S4, chloroplastic"/>
    <property type="match status" value="1"/>
</dbReference>
<dbReference type="FunFam" id="3.10.290.10:FF:000081">
    <property type="entry name" value="30S ribosomal protein S4, chloroplastic"/>
    <property type="match status" value="1"/>
</dbReference>
<dbReference type="Gene3D" id="1.10.1050.10">
    <property type="entry name" value="Ribosomal Protein S4 Delta 41, Chain A, domain 1"/>
    <property type="match status" value="1"/>
</dbReference>
<dbReference type="Gene3D" id="3.10.290.10">
    <property type="entry name" value="RNA-binding S4 domain"/>
    <property type="match status" value="1"/>
</dbReference>
<dbReference type="HAMAP" id="MF_01306_B">
    <property type="entry name" value="Ribosomal_uS4_B"/>
    <property type="match status" value="1"/>
</dbReference>
<dbReference type="InterPro" id="IPR022801">
    <property type="entry name" value="Ribosomal_uS4"/>
</dbReference>
<dbReference type="InterPro" id="IPR005709">
    <property type="entry name" value="Ribosomal_uS4_bac-type"/>
</dbReference>
<dbReference type="InterPro" id="IPR018079">
    <property type="entry name" value="Ribosomal_uS4_CS"/>
</dbReference>
<dbReference type="InterPro" id="IPR001912">
    <property type="entry name" value="Ribosomal_uS4_N"/>
</dbReference>
<dbReference type="InterPro" id="IPR002942">
    <property type="entry name" value="S4_RNA-bd"/>
</dbReference>
<dbReference type="InterPro" id="IPR036986">
    <property type="entry name" value="S4_RNA-bd_sf"/>
</dbReference>
<dbReference type="NCBIfam" id="NF003717">
    <property type="entry name" value="PRK05327.1"/>
    <property type="match status" value="1"/>
</dbReference>
<dbReference type="NCBIfam" id="TIGR01017">
    <property type="entry name" value="rpsD_bact"/>
    <property type="match status" value="1"/>
</dbReference>
<dbReference type="PANTHER" id="PTHR11831">
    <property type="entry name" value="30S 40S RIBOSOMAL PROTEIN"/>
    <property type="match status" value="1"/>
</dbReference>
<dbReference type="PANTHER" id="PTHR11831:SF4">
    <property type="entry name" value="SMALL RIBOSOMAL SUBUNIT PROTEIN US4M"/>
    <property type="match status" value="1"/>
</dbReference>
<dbReference type="Pfam" id="PF00163">
    <property type="entry name" value="Ribosomal_S4"/>
    <property type="match status" value="1"/>
</dbReference>
<dbReference type="Pfam" id="PF01479">
    <property type="entry name" value="S4"/>
    <property type="match status" value="1"/>
</dbReference>
<dbReference type="SMART" id="SM01390">
    <property type="entry name" value="Ribosomal_S4"/>
    <property type="match status" value="1"/>
</dbReference>
<dbReference type="SMART" id="SM00363">
    <property type="entry name" value="S4"/>
    <property type="match status" value="1"/>
</dbReference>
<dbReference type="SUPFAM" id="SSF55174">
    <property type="entry name" value="Alpha-L RNA-binding motif"/>
    <property type="match status" value="1"/>
</dbReference>
<dbReference type="PROSITE" id="PS00632">
    <property type="entry name" value="RIBOSOMAL_S4"/>
    <property type="match status" value="1"/>
</dbReference>
<dbReference type="PROSITE" id="PS50889">
    <property type="entry name" value="S4"/>
    <property type="match status" value="1"/>
</dbReference>
<evidence type="ECO:0000250" key="1"/>
<evidence type="ECO:0000256" key="2">
    <source>
        <dbReference type="SAM" id="MobiDB-lite"/>
    </source>
</evidence>
<evidence type="ECO:0000305" key="3"/>
<keyword id="KW-0150">Chloroplast</keyword>
<keyword id="KW-0934">Plastid</keyword>
<keyword id="KW-0687">Ribonucleoprotein</keyword>
<keyword id="KW-0689">Ribosomal protein</keyword>
<keyword id="KW-0694">RNA-binding</keyword>
<keyword id="KW-0699">rRNA-binding</keyword>
<protein>
    <recommendedName>
        <fullName evidence="3">Small ribosomal subunit protein uS4c</fullName>
    </recommendedName>
    <alternativeName>
        <fullName>30S ribosomal protein S4, chloroplastic</fullName>
    </alternativeName>
</protein>
<geneLocation type="chloroplast"/>
<name>RR4_NYMAL</name>